<proteinExistence type="evidence at protein level"/>
<evidence type="ECO:0000250" key="1">
    <source>
        <dbReference type="UniProtKB" id="O54968"/>
    </source>
</evidence>
<evidence type="ECO:0000250" key="2">
    <source>
        <dbReference type="UniProtKB" id="Q16236"/>
    </source>
</evidence>
<evidence type="ECO:0000255" key="3">
    <source>
        <dbReference type="PROSITE-ProRule" id="PRU00978"/>
    </source>
</evidence>
<evidence type="ECO:0000256" key="4">
    <source>
        <dbReference type="SAM" id="MobiDB-lite"/>
    </source>
</evidence>
<evidence type="ECO:0000269" key="5">
    <source>
    </source>
</evidence>
<evidence type="ECO:0000269" key="6">
    <source>
    </source>
</evidence>
<evidence type="ECO:0000269" key="7">
    <source>
    </source>
</evidence>
<evidence type="ECO:0000269" key="8">
    <source>
    </source>
</evidence>
<evidence type="ECO:0000269" key="9">
    <source>
    </source>
</evidence>
<evidence type="ECO:0000269" key="10">
    <source>
    </source>
</evidence>
<evidence type="ECO:0000269" key="11">
    <source>
    </source>
</evidence>
<evidence type="ECO:0000269" key="12">
    <source>
    </source>
</evidence>
<evidence type="ECO:0000269" key="13">
    <source>
    </source>
</evidence>
<evidence type="ECO:0000269" key="14">
    <source>
    </source>
</evidence>
<evidence type="ECO:0000269" key="15">
    <source>
    </source>
</evidence>
<evidence type="ECO:0000269" key="16">
    <source>
    </source>
</evidence>
<evidence type="ECO:0000269" key="17">
    <source>
    </source>
</evidence>
<evidence type="ECO:0000269" key="18">
    <source>
    </source>
</evidence>
<evidence type="ECO:0000269" key="19">
    <source>
    </source>
</evidence>
<evidence type="ECO:0000269" key="20">
    <source>
    </source>
</evidence>
<evidence type="ECO:0000269" key="21">
    <source>
    </source>
</evidence>
<evidence type="ECO:0000269" key="22">
    <source>
    </source>
</evidence>
<evidence type="ECO:0000269" key="23">
    <source>
    </source>
</evidence>
<evidence type="ECO:0000269" key="24">
    <source>
    </source>
</evidence>
<evidence type="ECO:0000269" key="25">
    <source>
    </source>
</evidence>
<evidence type="ECO:0000303" key="26">
    <source>
    </source>
</evidence>
<evidence type="ECO:0000303" key="27">
    <source>
    </source>
</evidence>
<evidence type="ECO:0000305" key="28"/>
<evidence type="ECO:0000305" key="29">
    <source>
    </source>
</evidence>
<evidence type="ECO:0000305" key="30">
    <source>
    </source>
</evidence>
<evidence type="ECO:0000305" key="31">
    <source>
    </source>
</evidence>
<evidence type="ECO:0000305" key="32">
    <source>
    </source>
</evidence>
<evidence type="ECO:0000312" key="33">
    <source>
        <dbReference type="MGI" id="MGI:108420"/>
    </source>
</evidence>
<evidence type="ECO:0007829" key="34">
    <source>
        <dbReference type="PDB" id="1X2R"/>
    </source>
</evidence>
<evidence type="ECO:0007829" key="35">
    <source>
        <dbReference type="PDB" id="3WN7"/>
    </source>
</evidence>
<reference key="1">
    <citation type="journal article" date="1996" name="Proc. Natl. Acad. Sci. U.S.A.">
        <title>NRF2, a member of the NFE2 family of transcription factors, is not essential for murine erythropoiesis, growth, and development.</title>
        <authorList>
            <person name="Chan K."/>
            <person name="Lu R."/>
            <person name="Chang J.C."/>
            <person name="Kan Y.W."/>
        </authorList>
    </citation>
    <scope>NUCLEOTIDE SEQUENCE [GENOMIC DNA]</scope>
    <source>
        <strain>129/SvJ</strain>
        <tissue>Lung</tissue>
    </source>
</reference>
<reference key="2">
    <citation type="journal article" date="2005" name="Science">
        <title>The transcriptional landscape of the mammalian genome.</title>
        <authorList>
            <person name="Carninci P."/>
            <person name="Kasukawa T."/>
            <person name="Katayama S."/>
            <person name="Gough J."/>
            <person name="Frith M.C."/>
            <person name="Maeda N."/>
            <person name="Oyama R."/>
            <person name="Ravasi T."/>
            <person name="Lenhard B."/>
            <person name="Wells C."/>
            <person name="Kodzius R."/>
            <person name="Shimokawa K."/>
            <person name="Bajic V.B."/>
            <person name="Brenner S.E."/>
            <person name="Batalov S."/>
            <person name="Forrest A.R."/>
            <person name="Zavolan M."/>
            <person name="Davis M.J."/>
            <person name="Wilming L.G."/>
            <person name="Aidinis V."/>
            <person name="Allen J.E."/>
            <person name="Ambesi-Impiombato A."/>
            <person name="Apweiler R."/>
            <person name="Aturaliya R.N."/>
            <person name="Bailey T.L."/>
            <person name="Bansal M."/>
            <person name="Baxter L."/>
            <person name="Beisel K.W."/>
            <person name="Bersano T."/>
            <person name="Bono H."/>
            <person name="Chalk A.M."/>
            <person name="Chiu K.P."/>
            <person name="Choudhary V."/>
            <person name="Christoffels A."/>
            <person name="Clutterbuck D.R."/>
            <person name="Crowe M.L."/>
            <person name="Dalla E."/>
            <person name="Dalrymple B.P."/>
            <person name="de Bono B."/>
            <person name="Della Gatta G."/>
            <person name="di Bernardo D."/>
            <person name="Down T."/>
            <person name="Engstrom P."/>
            <person name="Fagiolini M."/>
            <person name="Faulkner G."/>
            <person name="Fletcher C.F."/>
            <person name="Fukushima T."/>
            <person name="Furuno M."/>
            <person name="Futaki S."/>
            <person name="Gariboldi M."/>
            <person name="Georgii-Hemming P."/>
            <person name="Gingeras T.R."/>
            <person name="Gojobori T."/>
            <person name="Green R.E."/>
            <person name="Gustincich S."/>
            <person name="Harbers M."/>
            <person name="Hayashi Y."/>
            <person name="Hensch T.K."/>
            <person name="Hirokawa N."/>
            <person name="Hill D."/>
            <person name="Huminiecki L."/>
            <person name="Iacono M."/>
            <person name="Ikeo K."/>
            <person name="Iwama A."/>
            <person name="Ishikawa T."/>
            <person name="Jakt M."/>
            <person name="Kanapin A."/>
            <person name="Katoh M."/>
            <person name="Kawasawa Y."/>
            <person name="Kelso J."/>
            <person name="Kitamura H."/>
            <person name="Kitano H."/>
            <person name="Kollias G."/>
            <person name="Krishnan S.P."/>
            <person name="Kruger A."/>
            <person name="Kummerfeld S.K."/>
            <person name="Kurochkin I.V."/>
            <person name="Lareau L.F."/>
            <person name="Lazarevic D."/>
            <person name="Lipovich L."/>
            <person name="Liu J."/>
            <person name="Liuni S."/>
            <person name="McWilliam S."/>
            <person name="Madan Babu M."/>
            <person name="Madera M."/>
            <person name="Marchionni L."/>
            <person name="Matsuda H."/>
            <person name="Matsuzawa S."/>
            <person name="Miki H."/>
            <person name="Mignone F."/>
            <person name="Miyake S."/>
            <person name="Morris K."/>
            <person name="Mottagui-Tabar S."/>
            <person name="Mulder N."/>
            <person name="Nakano N."/>
            <person name="Nakauchi H."/>
            <person name="Ng P."/>
            <person name="Nilsson R."/>
            <person name="Nishiguchi S."/>
            <person name="Nishikawa S."/>
            <person name="Nori F."/>
            <person name="Ohara O."/>
            <person name="Okazaki Y."/>
            <person name="Orlando V."/>
            <person name="Pang K.C."/>
            <person name="Pavan W.J."/>
            <person name="Pavesi G."/>
            <person name="Pesole G."/>
            <person name="Petrovsky N."/>
            <person name="Piazza S."/>
            <person name="Reed J."/>
            <person name="Reid J.F."/>
            <person name="Ring B.Z."/>
            <person name="Ringwald M."/>
            <person name="Rost B."/>
            <person name="Ruan Y."/>
            <person name="Salzberg S.L."/>
            <person name="Sandelin A."/>
            <person name="Schneider C."/>
            <person name="Schoenbach C."/>
            <person name="Sekiguchi K."/>
            <person name="Semple C.A."/>
            <person name="Seno S."/>
            <person name="Sessa L."/>
            <person name="Sheng Y."/>
            <person name="Shibata Y."/>
            <person name="Shimada H."/>
            <person name="Shimada K."/>
            <person name="Silva D."/>
            <person name="Sinclair B."/>
            <person name="Sperling S."/>
            <person name="Stupka E."/>
            <person name="Sugiura K."/>
            <person name="Sultana R."/>
            <person name="Takenaka Y."/>
            <person name="Taki K."/>
            <person name="Tammoja K."/>
            <person name="Tan S.L."/>
            <person name="Tang S."/>
            <person name="Taylor M.S."/>
            <person name="Tegner J."/>
            <person name="Teichmann S.A."/>
            <person name="Ueda H.R."/>
            <person name="van Nimwegen E."/>
            <person name="Verardo R."/>
            <person name="Wei C.L."/>
            <person name="Yagi K."/>
            <person name="Yamanishi H."/>
            <person name="Zabarovsky E."/>
            <person name="Zhu S."/>
            <person name="Zimmer A."/>
            <person name="Hide W."/>
            <person name="Bult C."/>
            <person name="Grimmond S.M."/>
            <person name="Teasdale R.D."/>
            <person name="Liu E.T."/>
            <person name="Brusic V."/>
            <person name="Quackenbush J."/>
            <person name="Wahlestedt C."/>
            <person name="Mattick J.S."/>
            <person name="Hume D.A."/>
            <person name="Kai C."/>
            <person name="Sasaki D."/>
            <person name="Tomaru Y."/>
            <person name="Fukuda S."/>
            <person name="Kanamori-Katayama M."/>
            <person name="Suzuki M."/>
            <person name="Aoki J."/>
            <person name="Arakawa T."/>
            <person name="Iida J."/>
            <person name="Imamura K."/>
            <person name="Itoh M."/>
            <person name="Kato T."/>
            <person name="Kawaji H."/>
            <person name="Kawagashira N."/>
            <person name="Kawashima T."/>
            <person name="Kojima M."/>
            <person name="Kondo S."/>
            <person name="Konno H."/>
            <person name="Nakano K."/>
            <person name="Ninomiya N."/>
            <person name="Nishio T."/>
            <person name="Okada M."/>
            <person name="Plessy C."/>
            <person name="Shibata K."/>
            <person name="Shiraki T."/>
            <person name="Suzuki S."/>
            <person name="Tagami M."/>
            <person name="Waki K."/>
            <person name="Watahiki A."/>
            <person name="Okamura-Oho Y."/>
            <person name="Suzuki H."/>
            <person name="Kawai J."/>
            <person name="Hayashizaki Y."/>
        </authorList>
    </citation>
    <scope>NUCLEOTIDE SEQUENCE [LARGE SCALE MRNA]</scope>
    <source>
        <strain>C57BL/6J</strain>
        <tissue>Embryonic lung</tissue>
    </source>
</reference>
<reference key="3">
    <citation type="journal article" date="2009" name="PLoS Biol.">
        <title>Lineage-specific biology revealed by a finished genome assembly of the mouse.</title>
        <authorList>
            <person name="Church D.M."/>
            <person name="Goodstadt L."/>
            <person name="Hillier L.W."/>
            <person name="Zody M.C."/>
            <person name="Goldstein S."/>
            <person name="She X."/>
            <person name="Bult C.J."/>
            <person name="Agarwala R."/>
            <person name="Cherry J.L."/>
            <person name="DiCuccio M."/>
            <person name="Hlavina W."/>
            <person name="Kapustin Y."/>
            <person name="Meric P."/>
            <person name="Maglott D."/>
            <person name="Birtle Z."/>
            <person name="Marques A.C."/>
            <person name="Graves T."/>
            <person name="Zhou S."/>
            <person name="Teague B."/>
            <person name="Potamousis K."/>
            <person name="Churas C."/>
            <person name="Place M."/>
            <person name="Herschleb J."/>
            <person name="Runnheim R."/>
            <person name="Forrest D."/>
            <person name="Amos-Landgraf J."/>
            <person name="Schwartz D.C."/>
            <person name="Cheng Z."/>
            <person name="Lindblad-Toh K."/>
            <person name="Eichler E.E."/>
            <person name="Ponting C.P."/>
        </authorList>
    </citation>
    <scope>NUCLEOTIDE SEQUENCE [LARGE SCALE GENOMIC DNA]</scope>
    <source>
        <strain>C57BL/6J</strain>
    </source>
</reference>
<reference key="4">
    <citation type="journal article" date="2004" name="Genome Res.">
        <title>The status, quality, and expansion of the NIH full-length cDNA project: the Mammalian Gene Collection (MGC).</title>
        <authorList>
            <consortium name="The MGC Project Team"/>
        </authorList>
    </citation>
    <scope>NUCLEOTIDE SEQUENCE [LARGE SCALE MRNA]</scope>
    <source>
        <strain>Czech II</strain>
        <tissue>Mammary gland</tissue>
    </source>
</reference>
<reference key="5">
    <citation type="journal article" date="1995" name="Biochem. Biophys. Res. Commun.">
        <title>cDNA cloning of murine Nrf 2 gene, coding for a p45 NF-E2 related transcription factor.</title>
        <authorList>
            <person name="Chui D.H.K."/>
            <person name="Tang W."/>
            <person name="Orkin S.H."/>
        </authorList>
    </citation>
    <scope>NUCLEOTIDE SEQUENCE [MRNA] OF 17-597</scope>
    <source>
        <strain>C57BL/6J</strain>
        <tissue>Erythroblast</tissue>
    </source>
</reference>
<reference key="6">
    <citation type="journal article" date="1997" name="Biochem. Biophys. Res. Commun.">
        <title>An Nrf2/small Maf heterodimer mediates the induction of phase II detoxifying enzyme genes through antioxidant response elements.</title>
        <authorList>
            <person name="Itoh K."/>
            <person name="Chiba T."/>
            <person name="Takahashi S."/>
            <person name="Ishii T."/>
            <person name="Igarashi K."/>
            <person name="Katoh Y."/>
            <person name="Oyake T."/>
            <person name="Hayashi N."/>
            <person name="Satoh K."/>
            <person name="Hatayama I."/>
            <person name="Yamamoto M."/>
            <person name="Nabeshima Y."/>
        </authorList>
    </citation>
    <scope>FUNCTION</scope>
    <scope>INTERACTION WITH MAFK</scope>
    <scope>DISRUPTION PHENOTYPE</scope>
</reference>
<reference key="7">
    <citation type="journal article" date="1999" name="Genes Dev.">
        <title>Keap1 represses nuclear activation of antioxidant responsive elements by Nrf2 through binding to the amino-terminal Neh2 domain.</title>
        <authorList>
            <person name="Itoh K."/>
            <person name="Wakabayashi N."/>
            <person name="Katoh Y."/>
            <person name="Ishii T."/>
            <person name="Igarashi K."/>
            <person name="Engel J.D."/>
            <person name="Yamamoto M."/>
        </authorList>
    </citation>
    <scope>FUNCTION</scope>
    <scope>SUBCELLULAR LOCATION</scope>
    <scope>INTERACTION WITH KEAP1</scope>
</reference>
<reference key="8">
    <citation type="journal article" date="2001" name="Biochem. J.">
        <title>Cloning and characterization of the mouse polyamine-modulated factor-1 (mPMF-1) gene: an alternatively spliced homologue of the human transcription factor.</title>
        <authorList>
            <person name="Wang Y."/>
            <person name="Devereux W."/>
            <person name="Woster P.M."/>
            <person name="Casero R.A. Jr."/>
        </authorList>
    </citation>
    <scope>INTERACTION WITH PMF1</scope>
</reference>
<reference key="9">
    <citation type="journal article" date="2001" name="Proc. Natl. Acad. Sci. U.S.A.">
        <title>Sensitivity to carcinogenesis is increased and chemoprotective efficacy of enzyme inducers is lost in nrf2 transcription factor-deficient mice.</title>
        <authorList>
            <person name="Ramos-Gomez M."/>
            <person name="Kwak M.K."/>
            <person name="Dolan P.M."/>
            <person name="Itoh K."/>
            <person name="Yamamoto M."/>
            <person name="Talalay P."/>
            <person name="Kensler T.W."/>
        </authorList>
    </citation>
    <scope>DISRUPTION PHENOTYPE</scope>
</reference>
<reference key="10">
    <citation type="journal article" date="2002" name="Proc. Natl. Acad. Sci. U.S.A.">
        <title>Sulforaphane inhibits extracellular, intracellular, and antibiotic-resistant strains of Helicobacter pylori and prevents benzo[a]pyrene-induced stomach tumors.</title>
        <authorList>
            <person name="Fahey J.W."/>
            <person name="Haristoy X."/>
            <person name="Dolan P.M."/>
            <person name="Kensler T.W."/>
            <person name="Scholtus I."/>
            <person name="Stephenson K.K."/>
            <person name="Talalay P."/>
            <person name="Lozniewski A."/>
        </authorList>
    </citation>
    <scope>DISRUPTION PHENOTYPE</scope>
</reference>
<reference key="11">
    <citation type="journal article" date="2003" name="J. Biol. Chem.">
        <title>Deficiency of the Nrf1 and Nrf2 transcription factors results in early embryonic lethality and severe oxidative stress.</title>
        <authorList>
            <person name="Leung L."/>
            <person name="Kwong M."/>
            <person name="Hou S."/>
            <person name="Lee C."/>
            <person name="Chan J.Y."/>
        </authorList>
    </citation>
    <scope>DISRUPTION PHENOTYPE</scope>
</reference>
<reference key="12">
    <citation type="journal article" date="2003" name="Nat. Genet.">
        <title>Keap1-null mutation leads to postnatal lethality due to constitutive Nrf2 activation.</title>
        <authorList>
            <person name="Wakabayashi N."/>
            <person name="Itoh K."/>
            <person name="Wakabayashi J."/>
            <person name="Motohashi H."/>
            <person name="Noda S."/>
            <person name="Takahashi S."/>
            <person name="Imakado S."/>
            <person name="Kotsuji T."/>
            <person name="Otsuka F."/>
            <person name="Roop D.R."/>
            <person name="Harada T."/>
            <person name="Engel J.D."/>
            <person name="Yamamoto M."/>
        </authorList>
    </citation>
    <scope>FUNCTION</scope>
    <scope>SUBCELLULAR LOCATION</scope>
    <scope>DISRUPTION PHENOTYPE</scope>
</reference>
<reference key="13">
    <citation type="journal article" date="2003" name="Mol. Cell. Biol.">
        <title>Nrf2 is a direct PERK substrate and effector of PERK-dependent cell survival.</title>
        <authorList>
            <person name="Cullinan S.B."/>
            <person name="Zhang D."/>
            <person name="Hannink M."/>
            <person name="Arvisais E."/>
            <person name="Kaufman R.J."/>
            <person name="Diehl J.A."/>
        </authorList>
    </citation>
    <scope>FUNCTION</scope>
    <scope>SUBCELLULAR LOCATION</scope>
    <scope>PHOSPHORYLATION</scope>
</reference>
<reference key="14">
    <citation type="journal article" date="2004" name="J. Biol. Chem.">
        <title>PERK-dependent activation of Nrf2 contributes to redox homeostasis and cell survival following endoplasmic reticulum stress.</title>
        <authorList>
            <person name="Cullinan S.B."/>
            <person name="Diehl J.A."/>
        </authorList>
    </citation>
    <scope>FUNCTION</scope>
</reference>
<reference key="15">
    <citation type="journal article" date="2004" name="Mol. Cell. Biol.">
        <title>Oxidative stress sensor Keap1 functions as an adaptor for Cul3-based E3 ligase to regulate proteasomal degradation of Nrf2.</title>
        <authorList>
            <person name="Kobayashi A."/>
            <person name="Kang M.I."/>
            <person name="Okawa H."/>
            <person name="Ohtsuji M."/>
            <person name="Zenke Y."/>
            <person name="Chiba T."/>
            <person name="Igarashi K."/>
            <person name="Yamamoto M."/>
        </authorList>
    </citation>
    <scope>FUNCTION</scope>
    <scope>INTERACTION WITH KEAP1</scope>
    <scope>UBIQUITINATION</scope>
    <scope>ETGE MOTIF</scope>
    <scope>DOMAIN</scope>
    <scope>MUTAGENESIS OF 79-GLU--GLU-82</scope>
</reference>
<reference key="16">
    <citation type="journal article" date="2004" name="Mol. Cell. Biol.">
        <title>The Keap1-BTB protein is an adaptor that bridges Nrf2 to a Cul3-based E3 ligase: oxidative stress sensing by a Cul3-Keap1 ligase.</title>
        <authorList>
            <person name="Cullinan S.B."/>
            <person name="Gordan J.D."/>
            <person name="Jin J."/>
            <person name="Harper J.W."/>
            <person name="Diehl J.A."/>
        </authorList>
    </citation>
    <scope>FUNCTION</scope>
    <scope>SUBCELLULAR LOCATION</scope>
    <scope>INTERACTION WITH KEAP1</scope>
    <scope>UBIQUITINATION</scope>
</reference>
<reference key="17">
    <citation type="journal article" date="2005" name="Arch. Biochem. Biophys.">
        <title>Evolutionary conserved N-terminal domain of Nrf2 is essential for the Keap1-mediated degradation of the protein by proteasome.</title>
        <authorList>
            <person name="Katoh Y."/>
            <person name="Iida K."/>
            <person name="Kang M.I."/>
            <person name="Kobayashi A."/>
            <person name="Mizukami M."/>
            <person name="Tong K.I."/>
            <person name="McMahon M."/>
            <person name="Hayes J.D."/>
            <person name="Itoh K."/>
            <person name="Yamamoto M."/>
        </authorList>
    </citation>
    <scope>FUNCTION</scope>
    <scope>SUBCELLULAR LOCATION</scope>
    <scope>INTERACTION WITH KEAP1</scope>
    <scope>UBIQUITINATION</scope>
    <scope>DOMAIN</scope>
    <scope>ETGE AND DLG MOTIF</scope>
</reference>
<reference key="18">
    <citation type="journal article" date="2006" name="J. Biol. Chem.">
        <title>Dimerization of substrate adaptors can facilitate cullin-mediated ubiquitylation of proteins by a 'tethering' mechanism: a two-site interaction model for the Nrf2-Keap1 complex.</title>
        <authorList>
            <person name="McMahon M."/>
            <person name="Thomas N."/>
            <person name="Itoh K."/>
            <person name="Yamamoto M."/>
            <person name="Hayes J.D."/>
        </authorList>
    </citation>
    <scope>INTERACTION WITH KEAP1</scope>
    <scope>UBIQUITINATION</scope>
    <scope>DOMAIN</scope>
    <scope>ETGE AND DLG MOTIF</scope>
    <scope>MUTAGENESIS OF 18-ASP--LEU-23; 29-ASP--GLY-31 AND 79-GLU--GLU-82</scope>
</reference>
<reference key="19">
    <citation type="journal article" date="2006" name="J. Clin. Invest.">
        <title>Nrf2 is a critical regulator of the innate immune response and survival during experimental sepsis.</title>
        <authorList>
            <person name="Thimmulappa R.K."/>
            <person name="Lee H."/>
            <person name="Rangasamy T."/>
            <person name="Reddy S.P."/>
            <person name="Yamamoto M."/>
            <person name="Kensler T.W."/>
            <person name="Biswal S."/>
        </authorList>
    </citation>
    <scope>FUNCTION</scope>
    <scope>DISRUPTION PHENOTYPE</scope>
</reference>
<reference key="20">
    <citation type="journal article" date="2006" name="Mol. Cell. Biol.">
        <title>Keap1 recruits Neh2 through binding to ETGE and DLG motifs: characterization of the two-site molecular recognition model.</title>
        <authorList>
            <person name="Tong K.I."/>
            <person name="Katoh Y."/>
            <person name="Kusunoki H."/>
            <person name="Itoh K."/>
            <person name="Tanaka T."/>
            <person name="Yamamoto M."/>
        </authorList>
    </citation>
    <scope>INTERACTION WITH KEAP1</scope>
    <scope>UBIQUITINATION</scope>
    <scope>DOMAIN</scope>
    <scope>DLG MOTIF</scope>
    <scope>MUTAGENESIS OF 79-GLU--GLU-82</scope>
</reference>
<reference key="21">
    <citation type="journal article" date="2007" name="Mol. Cell. Endocrinol.">
        <title>ERRbeta: a potent inhibitor of Nrf2 transcriptional activity.</title>
        <authorList>
            <person name="Zhou W."/>
            <person name="Lo S.C."/>
            <person name="Liu J.H."/>
            <person name="Hannink M."/>
            <person name="Lubahn D.B."/>
        </authorList>
    </citation>
    <scope>INTERACTION WITH ESRRB</scope>
</reference>
<reference key="22">
    <citation type="journal article" date="2010" name="J. Biol. Chem.">
        <title>The critical role of nitric oxide signaling, via protein S-guanylation and nitrated cyclic GMP, in the antioxidant adaptive response.</title>
        <authorList>
            <person name="Fujii S."/>
            <person name="Sawa T."/>
            <person name="Ihara H."/>
            <person name="Tong K.I."/>
            <person name="Ida T."/>
            <person name="Okamoto T."/>
            <person name="Ahtesham A.K."/>
            <person name="Ishima Y."/>
            <person name="Motohashi H."/>
            <person name="Yamamoto M."/>
            <person name="Akaike T."/>
        </authorList>
    </citation>
    <scope>FUNCTION</scope>
    <scope>SUBCELLULAR LOCATION</scope>
</reference>
<reference key="23">
    <citation type="journal article" date="2010" name="Mol. Cell. Biol.">
        <title>A noncanonical mechanism of Nrf2 activation by autophagy deficiency: direct interaction between Keap1 and p62.</title>
        <authorList>
            <person name="Lau A."/>
            <person name="Wang X.J."/>
            <person name="Zhao F."/>
            <person name="Villeneuve N.F."/>
            <person name="Wu T."/>
            <person name="Jiang T."/>
            <person name="Sun Z."/>
            <person name="White E."/>
            <person name="Zhang D.D."/>
        </authorList>
    </citation>
    <scope>FUNCTION</scope>
    <scope>UBIQUITINATION</scope>
</reference>
<reference key="24">
    <citation type="journal article" date="2010" name="Nat. Cell Biol.">
        <title>The selective autophagy substrate p62 activates the stress responsive transcription factor Nrf2 through inactivation of Keap1.</title>
        <authorList>
            <person name="Komatsu M."/>
            <person name="Kurokawa H."/>
            <person name="Waguri S."/>
            <person name="Taguchi K."/>
            <person name="Kobayashi A."/>
            <person name="Ichimura Y."/>
            <person name="Sou Y.S."/>
            <person name="Ueno I."/>
            <person name="Sakamoto A."/>
            <person name="Tong K.I."/>
            <person name="Kim M."/>
            <person name="Nishito Y."/>
            <person name="Iemura S."/>
            <person name="Natsume T."/>
            <person name="Ueno T."/>
            <person name="Kominami E."/>
            <person name="Motohashi H."/>
            <person name="Tanaka K."/>
            <person name="Yamamoto M."/>
        </authorList>
    </citation>
    <scope>FUNCTION</scope>
</reference>
<reference key="25">
    <citation type="journal article" date="2016" name="Nat. Commun.">
        <title>Nrf2 suppresses macrophage inflammatory response by blocking proinflammatory cytokine transcription.</title>
        <authorList>
            <person name="Kobayashi E.H."/>
            <person name="Suzuki T."/>
            <person name="Funayama R."/>
            <person name="Nagashima T."/>
            <person name="Hayashi M."/>
            <person name="Sekine H."/>
            <person name="Tanaka N."/>
            <person name="Moriguchi T."/>
            <person name="Motohashi H."/>
            <person name="Nakayama K."/>
            <person name="Yamamoto M."/>
        </authorList>
    </citation>
    <scope>FUNCTION</scope>
</reference>
<reference key="26">
    <citation type="journal article" date="2019" name="Cell">
        <title>The oncogenic action of NRF2 depends on de-glycation by fructosamine-3-kinase.</title>
        <authorList>
            <person name="Sanghvi V.R."/>
            <person name="Leibold J."/>
            <person name="Mina M."/>
            <person name="Mohan P."/>
            <person name="Berishaj M."/>
            <person name="Li Z."/>
            <person name="Miele M.M."/>
            <person name="Lailler N."/>
            <person name="Zhao C."/>
            <person name="de Stanchina E."/>
            <person name="Viale A."/>
            <person name="Akkari L."/>
            <person name="Lowe S.W."/>
            <person name="Ciriello G."/>
            <person name="Hendrickson R.C."/>
            <person name="Wendel H.G."/>
        </authorList>
    </citation>
    <scope>GLYCATION</scope>
    <scope>FUNCTION</scope>
    <scope>INTERACTION WITH MAFG</scope>
</reference>
<reference key="27">
    <citation type="journal article" date="2017" name="J. Biol. Chem.">
        <title>Stress-sensing mechanisms and the physiological roles of the Keap1-Nrf2 system during cellular stress.</title>
        <authorList>
            <person name="Suzuki T."/>
            <person name="Yamamoto M."/>
        </authorList>
    </citation>
    <scope>REVIEW</scope>
</reference>
<reference key="28">
    <citation type="journal article" date="2006" name="Mol. Cell">
        <title>Structural basis for defects of Keap1 activity provoked by its point mutations in lung cancer.</title>
        <authorList>
            <person name="Padmanabhan B."/>
            <person name="Tong K.I."/>
            <person name="Ohta T."/>
            <person name="Nakamura Y."/>
            <person name="Scharlock M."/>
            <person name="Ohtsuji M."/>
            <person name="Kang M."/>
            <person name="Kobayashi A."/>
            <person name="Yokoyama S."/>
            <person name="Yamamoto M."/>
        </authorList>
    </citation>
    <scope>X-RAY CRYSTALLOGRAPHY (1.60 ANGSTROMS) OF 76-84 IN COMPLEX WITH KEAP1</scope>
</reference>
<organism>
    <name type="scientific">Mus musculus</name>
    <name type="common">Mouse</name>
    <dbReference type="NCBI Taxonomy" id="10090"/>
    <lineage>
        <taxon>Eukaryota</taxon>
        <taxon>Metazoa</taxon>
        <taxon>Chordata</taxon>
        <taxon>Craniata</taxon>
        <taxon>Vertebrata</taxon>
        <taxon>Euteleostomi</taxon>
        <taxon>Mammalia</taxon>
        <taxon>Eutheria</taxon>
        <taxon>Euarchontoglires</taxon>
        <taxon>Glires</taxon>
        <taxon>Rodentia</taxon>
        <taxon>Myomorpha</taxon>
        <taxon>Muroidea</taxon>
        <taxon>Muridae</taxon>
        <taxon>Murinae</taxon>
        <taxon>Mus</taxon>
        <taxon>Mus</taxon>
    </lineage>
</organism>
<feature type="chain" id="PRO_0000076450" description="Nuclear factor erythroid 2-related factor 2">
    <location>
        <begin position="1"/>
        <end position="597"/>
    </location>
</feature>
<feature type="domain" description="bZIP" evidence="3">
    <location>
        <begin position="489"/>
        <end position="552"/>
    </location>
</feature>
<feature type="region of interest" description="Disordered" evidence="4">
    <location>
        <begin position="327"/>
        <end position="440"/>
    </location>
</feature>
<feature type="region of interest" description="Basic motif" evidence="3">
    <location>
        <begin position="491"/>
        <end position="510"/>
    </location>
</feature>
<feature type="region of interest" description="Leucine-zipper" evidence="3">
    <location>
        <begin position="514"/>
        <end position="521"/>
    </location>
</feature>
<feature type="region of interest" description="Disordered" evidence="4">
    <location>
        <begin position="563"/>
        <end position="597"/>
    </location>
</feature>
<feature type="region of interest" description="Mediates interaction with CHD6 and is necessary to activate transcription" evidence="1">
    <location>
        <begin position="583"/>
        <end position="588"/>
    </location>
</feature>
<feature type="short sequence motif" description="DLG motif" evidence="30 31 32">
    <location>
        <begin position="29"/>
        <end position="31"/>
    </location>
</feature>
<feature type="short sequence motif" description="ETGE motif" evidence="29 31 32">
    <location>
        <begin position="79"/>
        <end position="82"/>
    </location>
</feature>
<feature type="compositionally biased region" description="Polar residues" evidence="4">
    <location>
        <begin position="333"/>
        <end position="345"/>
    </location>
</feature>
<feature type="compositionally biased region" description="Polar residues" evidence="4">
    <location>
        <begin position="571"/>
        <end position="580"/>
    </location>
</feature>
<feature type="modified residue" description="Phosphoserine; by PKC" evidence="1">
    <location>
        <position position="40"/>
    </location>
</feature>
<feature type="modified residue" description="Phosphoserine" evidence="2">
    <location>
        <position position="207"/>
    </location>
</feature>
<feature type="modified residue" description="N6-acetyllysine; by CREBBP" evidence="2">
    <location>
        <position position="588"/>
    </location>
</feature>
<feature type="modified residue" description="N6-acetyllysine; by CREBBP" evidence="2">
    <location>
        <position position="591"/>
    </location>
</feature>
<feature type="glycosylation site" description="N-linked (Glc) (glycation) lysine" evidence="2">
    <location>
        <position position="454"/>
    </location>
</feature>
<feature type="glycosylation site" description="N-linked (Glc) (glycation) lysine" evidence="2">
    <location>
        <position position="464"/>
    </location>
</feature>
<feature type="glycosylation site" description="N-linked (Glc) (glycation) lysine" evidence="2">
    <location>
        <position position="479"/>
    </location>
</feature>
<feature type="glycosylation site" description="N-linked (Glc) (glycation) arginine" evidence="2">
    <location>
        <position position="491"/>
    </location>
</feature>
<feature type="glycosylation site" description="N-linked (Glc) (glycation) arginine" evidence="2">
    <location>
        <position position="561"/>
    </location>
</feature>
<feature type="glycosylation site" description="N-linked (Glc) (glycation) lysine" evidence="2">
    <location>
        <position position="566"/>
    </location>
</feature>
<feature type="mutagenesis site" description="Does not affect ubiquitination and degradation by the BCR(KEAP1) complex in the cytoplasm." evidence="18">
    <original>DLIDIL</original>
    <variation>ALIDIA</variation>
    <location>
        <begin position="18"/>
        <end position="23"/>
    </location>
</feature>
<feature type="mutagenesis site" description="Abolished ubiquitination and degradation by the BCR(KEAP1) complex in the cytoplasm; when associated with A-30." evidence="14">
    <original>LIDIL</original>
    <variation>AIDIA</variation>
    <location>
        <begin position="19"/>
        <end position="23"/>
    </location>
</feature>
<feature type="mutagenesis site" description="Abolished ubiquitination and degradation by the BCR(KEAP1) complex in the cytoplasm." evidence="18">
    <original>DLG</original>
    <variation>AGE</variation>
    <location>
        <begin position="29"/>
        <end position="31"/>
    </location>
</feature>
<feature type="mutagenesis site" description="Abolished ubiquitination and degradation by the BCR(KEAP1) complex in the cytoplasm; when associated with 19-A--A-23." evidence="14">
    <original>L</original>
    <variation>A</variation>
    <location>
        <position position="30"/>
    </location>
</feature>
<feature type="mutagenesis site" description="Abolished interaction with KEAP1." evidence="12 16 18">
    <location>
        <begin position="79"/>
        <end position="82"/>
    </location>
</feature>
<feature type="helix" evidence="35">
    <location>
        <begin position="19"/>
        <end position="25"/>
    </location>
</feature>
<feature type="helix" evidence="35">
    <location>
        <begin position="28"/>
        <end position="30"/>
    </location>
</feature>
<feature type="helix" evidence="35">
    <location>
        <begin position="34"/>
        <end position="37"/>
    </location>
</feature>
<feature type="turn" evidence="34">
    <location>
        <begin position="78"/>
        <end position="80"/>
    </location>
</feature>
<accession>Q60795</accession>
<accession>Q3UQK0</accession>
<gene>
    <name evidence="33" type="primary">Nfe2l2</name>
    <name evidence="26 27" type="synonym">Nrf2</name>
</gene>
<dbReference type="EMBL" id="U70475">
    <property type="protein sequence ID" value="AAC52983.1"/>
    <property type="molecule type" value="Genomic_DNA"/>
</dbReference>
<dbReference type="EMBL" id="U70474">
    <property type="protein sequence ID" value="AAC52983.1"/>
    <property type="status" value="JOINED"/>
    <property type="molecule type" value="Genomic_DNA"/>
</dbReference>
<dbReference type="EMBL" id="AK142347">
    <property type="protein sequence ID" value="BAE25040.1"/>
    <property type="molecule type" value="mRNA"/>
</dbReference>
<dbReference type="EMBL" id="AL772404">
    <property type="status" value="NOT_ANNOTATED_CDS"/>
    <property type="molecule type" value="Genomic_DNA"/>
</dbReference>
<dbReference type="EMBL" id="BC026943">
    <property type="protein sequence ID" value="AAH26943.1"/>
    <property type="molecule type" value="mRNA"/>
</dbReference>
<dbReference type="EMBL" id="U20532">
    <property type="protein sequence ID" value="AAA68291.1"/>
    <property type="molecule type" value="mRNA"/>
</dbReference>
<dbReference type="CCDS" id="CCDS16150.1"/>
<dbReference type="PIR" id="I49261">
    <property type="entry name" value="I49261"/>
</dbReference>
<dbReference type="RefSeq" id="NP_035032.1">
    <property type="nucleotide sequence ID" value="NM_010902.5"/>
</dbReference>
<dbReference type="PDB" id="1X2R">
    <property type="method" value="X-ray"/>
    <property type="resolution" value="1.70 A"/>
    <property type="chains" value="B=76-84"/>
</dbReference>
<dbReference type="PDB" id="2DYH">
    <property type="method" value="X-ray"/>
    <property type="resolution" value="1.90 A"/>
    <property type="chains" value="B=22-36"/>
</dbReference>
<dbReference type="PDB" id="3WN7">
    <property type="method" value="X-ray"/>
    <property type="resolution" value="1.57 A"/>
    <property type="chains" value="B/M=17-51"/>
</dbReference>
<dbReference type="PDB" id="7ECA">
    <property type="method" value="X-ray"/>
    <property type="resolution" value="2.00 A"/>
    <property type="chains" value="B=65-89"/>
</dbReference>
<dbReference type="PDBsum" id="1X2R"/>
<dbReference type="PDBsum" id="2DYH"/>
<dbReference type="PDBsum" id="3WN7"/>
<dbReference type="PDBsum" id="7ECA"/>
<dbReference type="SMR" id="Q60795"/>
<dbReference type="BioGRID" id="201744">
    <property type="interactions" value="26"/>
</dbReference>
<dbReference type="CORUM" id="Q60795"/>
<dbReference type="DIP" id="DIP-49666N"/>
<dbReference type="ELM" id="Q60795"/>
<dbReference type="FunCoup" id="Q60795">
    <property type="interactions" value="1875"/>
</dbReference>
<dbReference type="IntAct" id="Q60795">
    <property type="interactions" value="6"/>
</dbReference>
<dbReference type="MINT" id="Q60795"/>
<dbReference type="STRING" id="10090.ENSMUSP00000099733"/>
<dbReference type="BindingDB" id="Q60795"/>
<dbReference type="ChEMBL" id="CHEMBL1075148"/>
<dbReference type="GlyCosmos" id="Q60795">
    <property type="glycosylation" value="6 sites, No reported glycans"/>
</dbReference>
<dbReference type="iPTMnet" id="Q60795"/>
<dbReference type="PhosphoSitePlus" id="Q60795"/>
<dbReference type="PaxDb" id="10090-ENSMUSP00000099733"/>
<dbReference type="ProteomicsDB" id="287396"/>
<dbReference type="Antibodypedia" id="903">
    <property type="antibodies" value="858 antibodies from 45 providers"/>
</dbReference>
<dbReference type="DNASU" id="18024"/>
<dbReference type="Ensembl" id="ENSMUST00000102672.5">
    <property type="protein sequence ID" value="ENSMUSP00000099733.5"/>
    <property type="gene ID" value="ENSMUSG00000015839.7"/>
</dbReference>
<dbReference type="GeneID" id="18024"/>
<dbReference type="KEGG" id="mmu:18024"/>
<dbReference type="UCSC" id="uc008keq.1">
    <property type="organism name" value="mouse"/>
</dbReference>
<dbReference type="AGR" id="MGI:108420"/>
<dbReference type="CTD" id="4780"/>
<dbReference type="MGI" id="MGI:108420">
    <property type="gene designation" value="Nfe2l2"/>
</dbReference>
<dbReference type="VEuPathDB" id="HostDB:ENSMUSG00000015839"/>
<dbReference type="eggNOG" id="KOG3863">
    <property type="taxonomic scope" value="Eukaryota"/>
</dbReference>
<dbReference type="GeneTree" id="ENSGT00950000182892"/>
<dbReference type="HOGENOM" id="CLU_498373_0_0_1"/>
<dbReference type="InParanoid" id="Q60795"/>
<dbReference type="OMA" id="DMEEMDQ"/>
<dbReference type="OrthoDB" id="7458135at2759"/>
<dbReference type="PhylomeDB" id="Q60795"/>
<dbReference type="TreeFam" id="TF326681"/>
<dbReference type="Reactome" id="R-MMU-8951664">
    <property type="pathway name" value="Neddylation"/>
</dbReference>
<dbReference type="Reactome" id="R-MMU-9755511">
    <property type="pathway name" value="KEAP1-NFE2L2 pathway"/>
</dbReference>
<dbReference type="Reactome" id="R-MMU-9759194">
    <property type="pathway name" value="Nuclear events mediated by NFE2L2"/>
</dbReference>
<dbReference type="Reactome" id="R-MMU-9762114">
    <property type="pathway name" value="GSK3B and BTRC:CUL1-mediated-degradation of NFE2L2"/>
</dbReference>
<dbReference type="BioGRID-ORCS" id="18024">
    <property type="hits" value="8 hits in 85 CRISPR screens"/>
</dbReference>
<dbReference type="ChiTaRS" id="Nfe2l2">
    <property type="organism name" value="mouse"/>
</dbReference>
<dbReference type="EvolutionaryTrace" id="Q60795"/>
<dbReference type="PRO" id="PR:Q60795"/>
<dbReference type="Proteomes" id="UP000000589">
    <property type="component" value="Chromosome 2"/>
</dbReference>
<dbReference type="RNAct" id="Q60795">
    <property type="molecule type" value="protein"/>
</dbReference>
<dbReference type="Bgee" id="ENSMUSG00000015839">
    <property type="expression patterns" value="Expressed in urinary bladder urothelium and 271 other cell types or tissues"/>
</dbReference>
<dbReference type="GO" id="GO:0005813">
    <property type="term" value="C:centrosome"/>
    <property type="evidence" value="ECO:0007669"/>
    <property type="project" value="Ensembl"/>
</dbReference>
<dbReference type="GO" id="GO:0000785">
    <property type="term" value="C:chromatin"/>
    <property type="evidence" value="ECO:0000314"/>
    <property type="project" value="BHF-UCL"/>
</dbReference>
<dbReference type="GO" id="GO:0036064">
    <property type="term" value="C:ciliary basal body"/>
    <property type="evidence" value="ECO:0007669"/>
    <property type="project" value="Ensembl"/>
</dbReference>
<dbReference type="GO" id="GO:0005737">
    <property type="term" value="C:cytoplasm"/>
    <property type="evidence" value="ECO:0000314"/>
    <property type="project" value="UniProtKB"/>
</dbReference>
<dbReference type="GO" id="GO:0005829">
    <property type="term" value="C:cytosol"/>
    <property type="evidence" value="ECO:0000314"/>
    <property type="project" value="BHF-UCL"/>
</dbReference>
<dbReference type="GO" id="GO:0005794">
    <property type="term" value="C:Golgi apparatus"/>
    <property type="evidence" value="ECO:0007669"/>
    <property type="project" value="Ensembl"/>
</dbReference>
<dbReference type="GO" id="GO:0005654">
    <property type="term" value="C:nucleoplasm"/>
    <property type="evidence" value="ECO:0000304"/>
    <property type="project" value="Reactome"/>
</dbReference>
<dbReference type="GO" id="GO:0005634">
    <property type="term" value="C:nucleus"/>
    <property type="evidence" value="ECO:0000314"/>
    <property type="project" value="UniProtKB"/>
</dbReference>
<dbReference type="GO" id="GO:0005886">
    <property type="term" value="C:plasma membrane"/>
    <property type="evidence" value="ECO:0007669"/>
    <property type="project" value="Ensembl"/>
</dbReference>
<dbReference type="GO" id="GO:0032993">
    <property type="term" value="C:protein-DNA complex"/>
    <property type="evidence" value="ECO:0000314"/>
    <property type="project" value="ParkinsonsUK-UCL"/>
</dbReference>
<dbReference type="GO" id="GO:0090575">
    <property type="term" value="C:RNA polymerase II transcription regulator complex"/>
    <property type="evidence" value="ECO:0007669"/>
    <property type="project" value="Ensembl"/>
</dbReference>
<dbReference type="GO" id="GO:0005667">
    <property type="term" value="C:transcription regulator complex"/>
    <property type="evidence" value="ECO:0000304"/>
    <property type="project" value="ParkinsonsUK-UCL"/>
</dbReference>
<dbReference type="GO" id="GO:0003677">
    <property type="term" value="F:DNA binding"/>
    <property type="evidence" value="ECO:0000314"/>
    <property type="project" value="MGI"/>
</dbReference>
<dbReference type="GO" id="GO:0001228">
    <property type="term" value="F:DNA-binding transcription activator activity, RNA polymerase II-specific"/>
    <property type="evidence" value="ECO:0000314"/>
    <property type="project" value="NTNU_SB"/>
</dbReference>
<dbReference type="GO" id="GO:0003700">
    <property type="term" value="F:DNA-binding transcription factor activity"/>
    <property type="evidence" value="ECO:0000314"/>
    <property type="project" value="UniProtKB"/>
</dbReference>
<dbReference type="GO" id="GO:0140693">
    <property type="term" value="F:molecular condensate scaffold activity"/>
    <property type="evidence" value="ECO:0007669"/>
    <property type="project" value="Ensembl"/>
</dbReference>
<dbReference type="GO" id="GO:0019904">
    <property type="term" value="F:protein domain specific binding"/>
    <property type="evidence" value="ECO:0007669"/>
    <property type="project" value="Ensembl"/>
</dbReference>
<dbReference type="GO" id="GO:0000978">
    <property type="term" value="F:RNA polymerase II cis-regulatory region sequence-specific DNA binding"/>
    <property type="evidence" value="ECO:0000314"/>
    <property type="project" value="NTNU_SB"/>
</dbReference>
<dbReference type="GO" id="GO:0061629">
    <property type="term" value="F:RNA polymerase II-specific DNA-binding transcription factor binding"/>
    <property type="evidence" value="ECO:0007669"/>
    <property type="project" value="Ensembl"/>
</dbReference>
<dbReference type="GO" id="GO:0043565">
    <property type="term" value="F:sequence-specific DNA binding"/>
    <property type="evidence" value="ECO:0000314"/>
    <property type="project" value="UniProtKB"/>
</dbReference>
<dbReference type="GO" id="GO:0000976">
    <property type="term" value="F:transcription cis-regulatory region binding"/>
    <property type="evidence" value="ECO:0000314"/>
    <property type="project" value="UniProtKB"/>
</dbReference>
<dbReference type="GO" id="GO:0001221">
    <property type="term" value="F:transcription coregulator binding"/>
    <property type="evidence" value="ECO:0007669"/>
    <property type="project" value="Ensembl"/>
</dbReference>
<dbReference type="GO" id="GO:0008134">
    <property type="term" value="F:transcription factor binding"/>
    <property type="evidence" value="ECO:0000353"/>
    <property type="project" value="UniProtKB"/>
</dbReference>
<dbReference type="GO" id="GO:0031625">
    <property type="term" value="F:ubiquitin protein ligase binding"/>
    <property type="evidence" value="ECO:0007669"/>
    <property type="project" value="Ensembl"/>
</dbReference>
<dbReference type="GO" id="GO:0046223">
    <property type="term" value="P:aflatoxin catabolic process"/>
    <property type="evidence" value="ECO:0007669"/>
    <property type="project" value="Ensembl"/>
</dbReference>
<dbReference type="GO" id="GO:0045454">
    <property type="term" value="P:cell redox homeostasis"/>
    <property type="evidence" value="ECO:0000315"/>
    <property type="project" value="ParkinsonsUK-UCL"/>
</dbReference>
<dbReference type="GO" id="GO:1904385">
    <property type="term" value="P:cellular response to angiotensin"/>
    <property type="evidence" value="ECO:0007669"/>
    <property type="project" value="Ensembl"/>
</dbReference>
<dbReference type="GO" id="GO:0071280">
    <property type="term" value="P:cellular response to copper ion"/>
    <property type="evidence" value="ECO:0000315"/>
    <property type="project" value="MGI"/>
</dbReference>
<dbReference type="GO" id="GO:0071498">
    <property type="term" value="P:cellular response to fluid shear stress"/>
    <property type="evidence" value="ECO:0000250"/>
    <property type="project" value="UniProtKB"/>
</dbReference>
<dbReference type="GO" id="GO:0042149">
    <property type="term" value="P:cellular response to glucose starvation"/>
    <property type="evidence" value="ECO:0000315"/>
    <property type="project" value="ParkinsonsUK-UCL"/>
</dbReference>
<dbReference type="GO" id="GO:0070301">
    <property type="term" value="P:cellular response to hydrogen peroxide"/>
    <property type="evidence" value="ECO:0007669"/>
    <property type="project" value="Ensembl"/>
</dbReference>
<dbReference type="GO" id="GO:0071456">
    <property type="term" value="P:cellular response to hypoxia"/>
    <property type="evidence" value="ECO:0007669"/>
    <property type="project" value="Ensembl"/>
</dbReference>
<dbReference type="GO" id="GO:0071499">
    <property type="term" value="P:cellular response to laminar fluid shear stress"/>
    <property type="evidence" value="ECO:0007669"/>
    <property type="project" value="Ensembl"/>
</dbReference>
<dbReference type="GO" id="GO:0061431">
    <property type="term" value="P:cellular response to methionine"/>
    <property type="evidence" value="ECO:0007669"/>
    <property type="project" value="Ensembl"/>
</dbReference>
<dbReference type="GO" id="GO:0034599">
    <property type="term" value="P:cellular response to oxidative stress"/>
    <property type="evidence" value="ECO:0000314"/>
    <property type="project" value="UniProtKB"/>
</dbReference>
<dbReference type="GO" id="GO:0071356">
    <property type="term" value="P:cellular response to tumor necrosis factor"/>
    <property type="evidence" value="ECO:0007669"/>
    <property type="project" value="Ensembl"/>
</dbReference>
<dbReference type="GO" id="GO:0071466">
    <property type="term" value="P:cellular response to xenobiotic stimulus"/>
    <property type="evidence" value="ECO:0000315"/>
    <property type="project" value="MGI"/>
</dbReference>
<dbReference type="GO" id="GO:0030968">
    <property type="term" value="P:endoplasmic reticulum unfolded protein response"/>
    <property type="evidence" value="ECO:0000314"/>
    <property type="project" value="MGI"/>
</dbReference>
<dbReference type="GO" id="GO:0010467">
    <property type="term" value="P:gene expression"/>
    <property type="evidence" value="ECO:0000315"/>
    <property type="project" value="MGI"/>
</dbReference>
<dbReference type="GO" id="GO:0006954">
    <property type="term" value="P:inflammatory response"/>
    <property type="evidence" value="ECO:0000315"/>
    <property type="project" value="MGI"/>
</dbReference>
<dbReference type="GO" id="GO:0010667">
    <property type="term" value="P:negative regulation of cardiac muscle cell apoptotic process"/>
    <property type="evidence" value="ECO:0007669"/>
    <property type="project" value="Ensembl"/>
</dbReference>
<dbReference type="GO" id="GO:1900038">
    <property type="term" value="P:negative regulation of cellular response to hypoxia"/>
    <property type="evidence" value="ECO:0007669"/>
    <property type="project" value="Ensembl"/>
</dbReference>
<dbReference type="GO" id="GO:2000352">
    <property type="term" value="P:negative regulation of endothelial cell apoptotic process"/>
    <property type="evidence" value="ECO:0007669"/>
    <property type="project" value="Ensembl"/>
</dbReference>
<dbReference type="GO" id="GO:0110076">
    <property type="term" value="P:negative regulation of ferroptosis"/>
    <property type="evidence" value="ECO:0000250"/>
    <property type="project" value="UniProtKB"/>
</dbReference>
<dbReference type="GO" id="GO:1902037">
    <property type="term" value="P:negative regulation of hematopoietic stem cell differentiation"/>
    <property type="evidence" value="ECO:0000315"/>
    <property type="project" value="CACAO"/>
</dbReference>
<dbReference type="GO" id="GO:1902176">
    <property type="term" value="P:negative regulation of oxidative stress-induced intrinsic apoptotic signaling pathway"/>
    <property type="evidence" value="ECO:0007669"/>
    <property type="project" value="Ensembl"/>
</dbReference>
<dbReference type="GO" id="GO:1904753">
    <property type="term" value="P:negative regulation of vascular associated smooth muscle cell migration"/>
    <property type="evidence" value="ECO:0007669"/>
    <property type="project" value="Ensembl"/>
</dbReference>
<dbReference type="GO" id="GO:0036499">
    <property type="term" value="P:PERK-mediated unfolded protein response"/>
    <property type="evidence" value="ECO:0000314"/>
    <property type="project" value="ParkinsonsUK-UCL"/>
</dbReference>
<dbReference type="GO" id="GO:0045766">
    <property type="term" value="P:positive regulation of angiogenesis"/>
    <property type="evidence" value="ECO:0007669"/>
    <property type="project" value="Ensembl"/>
</dbReference>
<dbReference type="GO" id="GO:0030194">
    <property type="term" value="P:positive regulation of blood coagulation"/>
    <property type="evidence" value="ECO:0000315"/>
    <property type="project" value="BHF-UCL"/>
</dbReference>
<dbReference type="GO" id="GO:0043536">
    <property type="term" value="P:positive regulation of blood vessel endothelial cell migration"/>
    <property type="evidence" value="ECO:0007669"/>
    <property type="project" value="Ensembl"/>
</dbReference>
<dbReference type="GO" id="GO:0046326">
    <property type="term" value="P:positive regulation of D-glucose import"/>
    <property type="evidence" value="ECO:0000314"/>
    <property type="project" value="CACAO"/>
</dbReference>
<dbReference type="GO" id="GO:0045893">
    <property type="term" value="P:positive regulation of DNA-templated transcription"/>
    <property type="evidence" value="ECO:0000314"/>
    <property type="project" value="MGI"/>
</dbReference>
<dbReference type="GO" id="GO:0010628">
    <property type="term" value="P:positive regulation of gene expression"/>
    <property type="evidence" value="ECO:0000316"/>
    <property type="project" value="ParkinsonsUK-UCL"/>
</dbReference>
<dbReference type="GO" id="GO:1903788">
    <property type="term" value="P:positive regulation of glutathione biosynthetic process"/>
    <property type="evidence" value="ECO:0000315"/>
    <property type="project" value="ParkinsonsUK-UCL"/>
</dbReference>
<dbReference type="GO" id="GO:0010976">
    <property type="term" value="P:positive regulation of neuron projection development"/>
    <property type="evidence" value="ECO:0007669"/>
    <property type="project" value="Ensembl"/>
</dbReference>
<dbReference type="GO" id="GO:2000379">
    <property type="term" value="P:positive regulation of reactive oxygen species metabolic process"/>
    <property type="evidence" value="ECO:0000315"/>
    <property type="project" value="BHF-UCL"/>
</dbReference>
<dbReference type="GO" id="GO:0045944">
    <property type="term" value="P:positive regulation of transcription by RNA polymerase II"/>
    <property type="evidence" value="ECO:0000314"/>
    <property type="project" value="NTNU_SB"/>
</dbReference>
<dbReference type="GO" id="GO:0010499">
    <property type="term" value="P:proteasomal ubiquitin-independent protein catabolic process"/>
    <property type="evidence" value="ECO:0000250"/>
    <property type="project" value="UniProtKB"/>
</dbReference>
<dbReference type="GO" id="GO:0043161">
    <property type="term" value="P:proteasome-mediated ubiquitin-dependent protein catabolic process"/>
    <property type="evidence" value="ECO:0000250"/>
    <property type="project" value="UniProtKB"/>
</dbReference>
<dbReference type="GO" id="GO:0016567">
    <property type="term" value="P:protein ubiquitination"/>
    <property type="evidence" value="ECO:0000250"/>
    <property type="project" value="UniProtKB"/>
</dbReference>
<dbReference type="GO" id="GO:0072593">
    <property type="term" value="P:reactive oxygen species metabolic process"/>
    <property type="evidence" value="ECO:0000315"/>
    <property type="project" value="MGI"/>
</dbReference>
<dbReference type="GO" id="GO:0006355">
    <property type="term" value="P:regulation of DNA-templated transcription"/>
    <property type="evidence" value="ECO:0000314"/>
    <property type="project" value="MGI"/>
</dbReference>
<dbReference type="GO" id="GO:0045995">
    <property type="term" value="P:regulation of embryonic development"/>
    <property type="evidence" value="ECO:0000316"/>
    <property type="project" value="MGI"/>
</dbReference>
<dbReference type="GO" id="GO:0045088">
    <property type="term" value="P:regulation of innate immune response"/>
    <property type="evidence" value="ECO:0000315"/>
    <property type="project" value="UniProtKB"/>
</dbReference>
<dbReference type="GO" id="GO:2000121">
    <property type="term" value="P:regulation of removal of superoxide radicals"/>
    <property type="evidence" value="ECO:0000315"/>
    <property type="project" value="BHF-UCL"/>
</dbReference>
<dbReference type="GO" id="GO:0061771">
    <property type="term" value="P:response to caloric restriction"/>
    <property type="evidence" value="ECO:0000315"/>
    <property type="project" value="MGI"/>
</dbReference>
<dbReference type="GO" id="GO:0034976">
    <property type="term" value="P:response to endoplasmic reticulum stress"/>
    <property type="evidence" value="ECO:0000315"/>
    <property type="project" value="ParkinsonsUK-UCL"/>
</dbReference>
<dbReference type="GO" id="GO:0002931">
    <property type="term" value="P:response to ischemia"/>
    <property type="evidence" value="ECO:0007669"/>
    <property type="project" value="Ensembl"/>
</dbReference>
<dbReference type="CDD" id="cd14720">
    <property type="entry name" value="bZIP_NFE2-like"/>
    <property type="match status" value="1"/>
</dbReference>
<dbReference type="DisProt" id="DP00968"/>
<dbReference type="FunFam" id="1.10.880.10:FF:000001">
    <property type="entry name" value="Nuclear factor erythroid 2-related factor 2"/>
    <property type="match status" value="1"/>
</dbReference>
<dbReference type="Gene3D" id="1.10.880.10">
    <property type="entry name" value="Transcription factor, Skn-1-like, DNA-binding domain"/>
    <property type="match status" value="1"/>
</dbReference>
<dbReference type="IDEAL" id="IID50024"/>
<dbReference type="InterPro" id="IPR004827">
    <property type="entry name" value="bZIP"/>
</dbReference>
<dbReference type="InterPro" id="IPR004826">
    <property type="entry name" value="bZIP_Maf"/>
</dbReference>
<dbReference type="InterPro" id="IPR046347">
    <property type="entry name" value="bZIP_sf"/>
</dbReference>
<dbReference type="InterPro" id="IPR047167">
    <property type="entry name" value="NFE2-like"/>
</dbReference>
<dbReference type="InterPro" id="IPR008917">
    <property type="entry name" value="TF_DNA-bd_sf"/>
</dbReference>
<dbReference type="PANTHER" id="PTHR24411">
    <property type="entry name" value="NUCLEAR FACTOR ERYTHROID 2-RELATED FACTOR"/>
    <property type="match status" value="1"/>
</dbReference>
<dbReference type="PANTHER" id="PTHR24411:SF3">
    <property type="entry name" value="NUCLEAR FACTOR ERYTHROID 2-RELATED FACTOR 2"/>
    <property type="match status" value="1"/>
</dbReference>
<dbReference type="Pfam" id="PF03131">
    <property type="entry name" value="bZIP_Maf"/>
    <property type="match status" value="1"/>
</dbReference>
<dbReference type="SMART" id="SM00338">
    <property type="entry name" value="BRLZ"/>
    <property type="match status" value="1"/>
</dbReference>
<dbReference type="SUPFAM" id="SSF47454">
    <property type="entry name" value="A DNA-binding domain in eukaryotic transcription factors"/>
    <property type="match status" value="1"/>
</dbReference>
<dbReference type="SUPFAM" id="SSF57959">
    <property type="entry name" value="Leucine zipper domain"/>
    <property type="match status" value="1"/>
</dbReference>
<dbReference type="PROSITE" id="PS50217">
    <property type="entry name" value="BZIP"/>
    <property type="match status" value="1"/>
</dbReference>
<dbReference type="PROSITE" id="PS00036">
    <property type="entry name" value="BZIP_BASIC"/>
    <property type="match status" value="1"/>
</dbReference>
<keyword id="KW-0002">3D-structure</keyword>
<keyword id="KW-0007">Acetylation</keyword>
<keyword id="KW-0010">Activator</keyword>
<keyword id="KW-0963">Cytoplasm</keyword>
<keyword id="KW-0238">DNA-binding</keyword>
<keyword id="KW-0971">Glycation</keyword>
<keyword id="KW-0325">Glycoprotein</keyword>
<keyword id="KW-0539">Nucleus</keyword>
<keyword id="KW-0597">Phosphoprotein</keyword>
<keyword id="KW-1185">Reference proteome</keyword>
<keyword id="KW-0804">Transcription</keyword>
<keyword id="KW-0805">Transcription regulation</keyword>
<keyword id="KW-0832">Ubl conjugation</keyword>
<comment type="function">
    <text evidence="2 7 9 10 11 12 13 14 17 20 21 22 23 24 25">Transcription factor that plays a key role in the response to oxidative stress: binds to antioxidant response (ARE) elements present in the promoter region of many cytoprotective genes, such as phase 2 detoxifying enzymes, and promotes their expression, thereby neutralizing reactive electrophiles (PubMed:12032331, PubMed:14517290, PubMed:14517554, PubMed:31398338, PubMed:9240432, PubMed:9887101). In normal conditions, ubiquitinated and degraded in the cytoplasm by the BCR(KEAP1) complex (PubMed:14517290, PubMed:15282312, PubMed:15367669, PubMed:15581590). In response to oxidative stress, electrophile metabolites inhibit activity of the BCR(KEAP1) complex, promoting nuclear accumulation of NFE2L2/NRF2, heterodimerization with one of the small Maf proteins and binding to ARE elements of cytoprotective target genes (PubMed:12032331). The NFE2L2/NRF2 pathway is also activated in response to selective autophagy: autophagy promotes interaction between KEAP1 and SQSTM1/p62 and subsequent inactivation of the BCR(KEAP1) complex, leading to NFE2L2/NRF2 nuclear accumulation and expression of cytoprotective genes (PubMed:20173742, PubMed:20421418). The NFE2L2/NRF2 pathway is also activated during the unfolded protein response (UPR), contributing to redox homeostasis and cell survival following endoplasmic reticulum stress (PubMed:14517290, PubMed:14978030). May also be involved in the transcriptional activation of genes of the beta-globin cluster by mediating enhancer activity of hypersensitive site 2 of the beta-globin locus control region (By similarity). Also plays an important role in the regulation of the innate immune response. It is a critical regulator of the innate immune response and survival during sepsis by maintaining redox homeostasis and restraint of the dysregulation of pro-inflammatory signaling pathways like MyD88-dependent and -independent and TNF-alpha signaling (PubMed:16585964). Suppresses macrophage inflammatory response by blocking pro-inflammatory cytokine transcription and the induction of IL6 (PubMed:27211851). Binds to the proximity of pro-inflammatory genes in macrophages and inhibits RNA Pol II recruitment. The inhibition is independent of the Nrf2-binding motif and reactive oxygen species level (PubMed:27211851). Represses antiviral cytosolic DNA sensing by suppressing the expression of the adapter protein STING1 and decreasing responsiveness to STING1 agonists while increasing susceptibility to infection with DNA viruses (By similarity).</text>
</comment>
<comment type="subunit">
    <text evidence="1 2 6 12 13 14 15 16 18 19 23 24 25">Heterodimer; heterodimerizes with small Maf proteins (PubMed:9240432). Interacts (via the bZIP domain) with MAFG and MAFK; required for binding to antioxidant response elements (AREs) on DNA (PubMed:31398338, PubMed:9240432). Interacts with KEAP1; the interaction is direct and promotes ubiquitination by the BCR(KEAP1) E3 ubiquitin ligase complex (PubMed:15282312, PubMed:15367669, PubMed:15581590, PubMed:16507366, PubMed:16581765, PubMed:16790436, PubMed:9887101). Forms a ternary complex with PGAM5 and KEAP1 (By similarity). Interacts with EEF1D at heat shock promoter elements (HSE) (By similarity). Interacts via its leucine-zipper domain with the coiled-coil domain of PMF1 (PubMed:11583586). Interacts with CHD6; involved in activation of the transcription (By similarity). Interacts with ESRRB; represses NFE2L2 transcriptional activity (PubMed:17920186). Interacts with MOTS-c, a peptide produced by the mitochondrially encoded 12S rRNA MT-RNR1; the interaction occurs in the nucleus following metabolic stress (By similarity).</text>
</comment>
<comment type="interaction">
    <interactant intactId="EBI-642563">
        <id>Q60795</id>
    </interactant>
    <interactant intactId="EBI-641778">
        <id>Q8BWG8</id>
        <label>Arrb1</label>
    </interactant>
    <organismsDiffer>false</organismsDiffer>
    <experiments>4</experiments>
</comment>
<comment type="interaction">
    <interactant intactId="EBI-642563">
        <id>Q60795</id>
    </interactant>
    <interactant intactId="EBI-647110">
        <id>Q9Z2X8</id>
        <label>Keap1</label>
    </interactant>
    <organismsDiffer>false</organismsDiffer>
    <experiments>25</experiments>
</comment>
<comment type="interaction">
    <interactant intactId="EBI-642563">
        <id>Q60795</id>
    </interactant>
    <interactant intactId="EBI-2432975">
        <id>Q9QUR7</id>
        <label>Pin1</label>
    </interactant>
    <organismsDiffer>false</organismsDiffer>
    <experiments>3</experiments>
</comment>
<comment type="interaction">
    <interactant intactId="EBI-642563">
        <id>Q60795</id>
    </interactant>
    <interactant intactId="EBI-1175125">
        <id>P97474</id>
        <label>Pitx2</label>
    </interactant>
    <organismsDiffer>false</organismsDiffer>
    <experiments>2</experiments>
</comment>
<comment type="subcellular location">
    <subcellularLocation>
        <location evidence="9 13 25">Cytoplasm</location>
        <location evidence="9 13 25">Cytosol</location>
    </subcellularLocation>
    <subcellularLocation>
        <location evidence="3 7 9 10 25">Nucleus</location>
    </subcellularLocation>
    <text evidence="9 10 13">Cytosolic under unstressed conditions: ubiquitinated and degraded by the BCR(KEAP1) E3 ubiquitin ligase complex (PubMed:14517290, PubMed:15367669). Translocates into the nucleus upon induction by electrophilic agents that inactivate the BCR(KEAP1) E3 ubiquitin ligase complex (PubMed:14517290, PubMed:14517554).</text>
</comment>
<comment type="tissue specificity">
    <text>Widely expressed. Highest expression in liver, skeletal muscle, luminal cells of the stomach and intestine, lining of the bronchi and alveoli, and in renal tubules; followed by heart, spleen, testis and brain.</text>
</comment>
<comment type="domain">
    <text evidence="12 14 16 18">The ETGE motif, and to a lower extent the DLG motif, mediate interaction with KEAP1.</text>
</comment>
<comment type="PTM">
    <text evidence="12 13 14 18 21">Ubiquitinated in the cytoplasm by the BCR(KEAP1) E3 ubiquitin ligase complex leading to its degradation (PubMed:15282312, PubMed:15367669, PubMed:15581590, PubMed:16790436, PubMed:20421418). In response to oxidative stress, electrophile metabolites, such as sulforaphane, modify KEAP1, leading to inhibit activity of the BCR(KEAP1) complex, promoting NFE2L2/NRF2 nuclear accumulation and activity (PubMed:15367669). In response to autophagy, the BCR(KEAP1) complex is inactivated (PubMed:20421418).</text>
</comment>
<comment type="PTM">
    <text evidence="1 9">Phosphorylated by EIF2AK3/PERK following unfolded protein response (UPR), promoting dissociation from its cytoplasmic inhibitor KEAP1, followed by its translocation into the nucleus (PubMed:14517290). Phosphorylation of Ser-40 by PKC in response to oxidative stress dissociates NFE2L2 from its cytoplasmic inhibitor KEAP1, promoting its translocation into the nucleus (By similarity).</text>
</comment>
<comment type="PTM">
    <text evidence="2">Acetylation at Lys-588 and Lys-591 increases nuclear localization whereas deacetylation by SIRT1 enhances cytoplasmic presence.</text>
</comment>
<comment type="PTM">
    <text evidence="23">Glycation impairs transcription factor activity by preventing heterodimerization with small Maf proteins (PubMed:31398338). Deglycation by FN3K restores activity (PubMed:31398338).</text>
</comment>
<comment type="disruption phenotype">
    <text evidence="5 7 8 10 17 24">Mice are viable and fertile but have low and uninducible phase 2 detoxifying enzymes, are much more susceptible to carcinogens and the toxicity of oxygen and electrophiles and cannot be protected by inducers (PubMed:11248092, PubMed:12032331, PubMed:9240432). Mutant mice show an increased mortality during LPS and cecal ligation and puncture-induced septic shock compared to wild-types. They show greater pulmonary inflammation and greater TNF secretion upon LPS administration (PubMed:16585964). Mice lacking both Nfe2l2/Nrf2 and Keap1 reverse the hyperkeratosis phenotype observed in Keap1 knockout: mice and are healthy and viable in normal conditions (PubMed:14517554). Mice lacking both Nfe2l1 and Nfe2l2 die early between embryonic days 9 and 10 and exhibit extensive apoptosis due to marked oxidative stress in cells that is indicated by elevated intracellular reactive oxygen species levels and cell death (PubMed:12968018).</text>
</comment>
<comment type="similarity">
    <text evidence="28">Belongs to the bZIP family. CNC subfamily.</text>
</comment>
<sequence length="597" mass="66901">MMDLELPPPGLQSQQDMDLIDILWRQDIDLGVSREVFDFSQRQKDYELEKQKKLEKERQEQLQKEQEKAFFAQFQLDEETGEFLPIQPAQHIQTDTSGSASYSQVAHIPKQDALYFEDCMQLLAETFPFVDDHESLALDIPSHAESSVFTAPHQAQSLNSSLEAAMTDLSSIEQDMEQVWQELFSIPELQCLNTENKQLADTTAVPSPEATLTEMDSNYHFYSSISSLEKEVGNCGPHFLHGFEDSFSSILSTDDASQLTSLDSNPTLNTDFGDEFYSAFIAEPSDGGSMPSSAAISQSLSELLDGTIEGCDLSLCKAFNPKHAEGTMEFNDSDSGISLNTSPSRASPEHSVESSIYGDPPPGFSDSEMEELDSAPGSVKQNGPKAQPAHSPGDTVQPLSPAQGHSAPMRESQCENTTKKEVPVSPGHQKAPFTKDKHSSRLEAHLTRDELRAKALHIPFPVEKIINLPVDDFNEMMSKEQFNEAQLALIRDIRRRGKNKVAAQNCRKRKLENIVELEQDLGHLKDEREKLLREKGENDRNLHLLKRRLSTLYLEVFSMLRDEDGKPYSPSEYSLQQTRDGNVFLVPKSKKPDTKKN</sequence>
<protein>
    <recommendedName>
        <fullName evidence="27">Nuclear factor erythroid 2-related factor 2</fullName>
        <shortName evidence="27">NF-E2-related factor 2</shortName>
        <shortName evidence="27">NFE2-related factor 2</shortName>
    </recommendedName>
    <alternativeName>
        <fullName>Nuclear factor, erythroid derived 2, like 2</fullName>
    </alternativeName>
</protein>
<name>NF2L2_MOUSE</name>